<sequence>MSGKKSNLPDGRIPDRLPDGRPAVAWKSRWTEGTLPLWLVATAGGMAVIFVVGLFFYGSYVGVGSA</sequence>
<gene>
    <name evidence="1" type="primary">psbJ</name>
    <name type="ordered locus">sync_0236</name>
</gene>
<comment type="function">
    <text evidence="1">One of the components of the core complex of photosystem II (PSII). PSII is a light-driven water:plastoquinone oxidoreductase that uses light energy to abstract electrons from H(2)O, generating O(2) and a proton gradient subsequently used for ATP formation. It consists of a core antenna complex that captures photons, and an electron transfer chain that converts photonic excitation into a charge separation.</text>
</comment>
<comment type="subunit">
    <text evidence="1">PSII is composed of 1 copy each of membrane proteins PsbA, PsbB, PsbC, PsbD, PsbE, PsbF, PsbH, PsbI, PsbJ, PsbK, PsbL, PsbM, PsbT, PsbX, PsbY, PsbZ, Psb30/Ycf12, peripheral proteins PsbO, CyanoQ (PsbQ), PsbU, PsbV and a large number of cofactors. It forms dimeric complexes.</text>
</comment>
<comment type="subcellular location">
    <subcellularLocation>
        <location evidence="1">Cellular thylakoid membrane</location>
        <topology evidence="1">Single-pass membrane protein</topology>
    </subcellularLocation>
</comment>
<comment type="similarity">
    <text evidence="1">Belongs to the PsbJ family.</text>
</comment>
<accession>Q0IDK0</accession>
<dbReference type="EMBL" id="CP000435">
    <property type="protein sequence ID" value="ABI45649.1"/>
    <property type="molecule type" value="Genomic_DNA"/>
</dbReference>
<dbReference type="RefSeq" id="WP_011618220.1">
    <property type="nucleotide sequence ID" value="NC_008319.1"/>
</dbReference>
<dbReference type="SMR" id="Q0IDK0"/>
<dbReference type="STRING" id="64471.sync_0236"/>
<dbReference type="KEGG" id="syg:sync_0236"/>
<dbReference type="eggNOG" id="ENOG5030SSD">
    <property type="taxonomic scope" value="Bacteria"/>
</dbReference>
<dbReference type="HOGENOM" id="CLU_2829784_0_0_3"/>
<dbReference type="OrthoDB" id="466474at2"/>
<dbReference type="Proteomes" id="UP000001961">
    <property type="component" value="Chromosome"/>
</dbReference>
<dbReference type="GO" id="GO:0009539">
    <property type="term" value="C:photosystem II reaction center"/>
    <property type="evidence" value="ECO:0007669"/>
    <property type="project" value="InterPro"/>
</dbReference>
<dbReference type="GO" id="GO:0031676">
    <property type="term" value="C:plasma membrane-derived thylakoid membrane"/>
    <property type="evidence" value="ECO:0007669"/>
    <property type="project" value="UniProtKB-SubCell"/>
</dbReference>
<dbReference type="GO" id="GO:0015979">
    <property type="term" value="P:photosynthesis"/>
    <property type="evidence" value="ECO:0007669"/>
    <property type="project" value="UniProtKB-UniRule"/>
</dbReference>
<dbReference type="Gene3D" id="6.10.250.2070">
    <property type="match status" value="1"/>
</dbReference>
<dbReference type="HAMAP" id="MF_01305">
    <property type="entry name" value="PSII_PsbJ"/>
    <property type="match status" value="1"/>
</dbReference>
<dbReference type="InterPro" id="IPR002682">
    <property type="entry name" value="PSII_PsbJ"/>
</dbReference>
<dbReference type="InterPro" id="IPR037267">
    <property type="entry name" value="PSII_PsbJ_sf"/>
</dbReference>
<dbReference type="NCBIfam" id="NF002722">
    <property type="entry name" value="PRK02565.1"/>
    <property type="match status" value="1"/>
</dbReference>
<dbReference type="PANTHER" id="PTHR34812">
    <property type="entry name" value="PHOTOSYSTEM II REACTION CENTER PROTEIN J"/>
    <property type="match status" value="1"/>
</dbReference>
<dbReference type="PANTHER" id="PTHR34812:SF3">
    <property type="entry name" value="PHOTOSYSTEM II REACTION CENTER PROTEIN J"/>
    <property type="match status" value="1"/>
</dbReference>
<dbReference type="Pfam" id="PF01788">
    <property type="entry name" value="PsbJ"/>
    <property type="match status" value="1"/>
</dbReference>
<dbReference type="SUPFAM" id="SSF161021">
    <property type="entry name" value="Photosystem II reaction center protein J, PsbJ"/>
    <property type="match status" value="1"/>
</dbReference>
<keyword id="KW-0472">Membrane</keyword>
<keyword id="KW-0602">Photosynthesis</keyword>
<keyword id="KW-0604">Photosystem II</keyword>
<keyword id="KW-0674">Reaction center</keyword>
<keyword id="KW-1185">Reference proteome</keyword>
<keyword id="KW-0793">Thylakoid</keyword>
<keyword id="KW-0812">Transmembrane</keyword>
<keyword id="KW-1133">Transmembrane helix</keyword>
<organism>
    <name type="scientific">Synechococcus sp. (strain CC9311)</name>
    <dbReference type="NCBI Taxonomy" id="64471"/>
    <lineage>
        <taxon>Bacteria</taxon>
        <taxon>Bacillati</taxon>
        <taxon>Cyanobacteriota</taxon>
        <taxon>Cyanophyceae</taxon>
        <taxon>Synechococcales</taxon>
        <taxon>Synechococcaceae</taxon>
        <taxon>Synechococcus</taxon>
    </lineage>
</organism>
<reference key="1">
    <citation type="journal article" date="2006" name="Proc. Natl. Acad. Sci. U.S.A.">
        <title>Genome sequence of Synechococcus CC9311: insights into adaptation to a coastal environment.</title>
        <authorList>
            <person name="Palenik B."/>
            <person name="Ren Q."/>
            <person name="Dupont C.L."/>
            <person name="Myers G.S."/>
            <person name="Heidelberg J.F."/>
            <person name="Badger J.H."/>
            <person name="Madupu R."/>
            <person name="Nelson W.C."/>
            <person name="Brinkac L.M."/>
            <person name="Dodson R.J."/>
            <person name="Durkin A.S."/>
            <person name="Daugherty S.C."/>
            <person name="Sullivan S.A."/>
            <person name="Khouri H."/>
            <person name="Mohamoud Y."/>
            <person name="Halpin R."/>
            <person name="Paulsen I.T."/>
        </authorList>
    </citation>
    <scope>NUCLEOTIDE SEQUENCE [LARGE SCALE GENOMIC DNA]</scope>
    <source>
        <strain>CC9311</strain>
    </source>
</reference>
<proteinExistence type="inferred from homology"/>
<protein>
    <recommendedName>
        <fullName evidence="1">Photosystem II reaction center protein J</fullName>
        <shortName evidence="1">PSII-J</shortName>
    </recommendedName>
</protein>
<evidence type="ECO:0000255" key="1">
    <source>
        <dbReference type="HAMAP-Rule" id="MF_01305"/>
    </source>
</evidence>
<name>PSBJ_SYNS3</name>
<feature type="chain" id="PRO_0000292235" description="Photosystem II reaction center protein J">
    <location>
        <begin position="1"/>
        <end position="66"/>
    </location>
</feature>
<feature type="transmembrane region" description="Helical" evidence="1">
    <location>
        <begin position="37"/>
        <end position="57"/>
    </location>
</feature>